<sequence length="312" mass="36379">MAKVFSFILVTTALTMGREISALEDCAQEQMRLRAQVRLLETRVKQQQVKIKQLLQENEVQFLDKGDENTVIDLGSKRQYADCSEIFNDGYKLSGFYKIKPLQSPAEFSVYCDMSDGGGWTVIQRRSDGSENFNRGWKDYENGFGNFVQKHGEYWLGNKNLHFLTTQEDYTLKIDLADFEKNSRYAQYKNFKVGDEKNFYELNIGEYSGTAGDSLAGNFHPEVQWWASHQRMKFSTWDRDHDNYEGNCAEEDQSGWWFNRCHSANLNGVYYSGPYTAKTDNGIVWYTWHGWWYSLKSVVMKIRPNDFIPNVI</sequence>
<accession>Q08830</accession>
<accession>A6NKU4</accession>
<accession>Q4PJH9</accession>
<accession>Q53YF1</accession>
<accession>Q8NG32</accession>
<accession>Q96KW6</accession>
<accession>Q96QM6</accession>
<proteinExistence type="evidence at protein level"/>
<keyword id="KW-0002">3D-structure</keyword>
<keyword id="KW-1064">Adaptive immunity</keyword>
<keyword id="KW-0175">Coiled coil</keyword>
<keyword id="KW-0903">Direct protein sequencing</keyword>
<keyword id="KW-1015">Disulfide bond</keyword>
<keyword id="KW-0391">Immunity</keyword>
<keyword id="KW-1267">Proteomics identification</keyword>
<keyword id="KW-1185">Reference proteome</keyword>
<keyword id="KW-0964">Secreted</keyword>
<keyword id="KW-0732">Signal</keyword>
<comment type="function">
    <text evidence="3 6 7">Immune suppressive molecule that inhibits antigen-specific T-cell activation by acting as a major ligand of LAG3 (PubMed:30580966). Responsible for LAG3 T-cell inhibitory function (PubMed:30580966). Binds LAG3 independently from MHC class II (MHC-II) (PubMed:30580966). Secreted by, and promotes growth of, hepatocytes (PubMed:11470158, PubMed:19880967).</text>
</comment>
<comment type="subunit">
    <text evidence="3 7">Homodimer (PubMed:11470158). Interacts (via the Fibrinogen C-terminal domain) with LAG3 (via Ig-like domains 1 and 2) (PubMed:30580966).</text>
</comment>
<comment type="interaction">
    <interactant intactId="EBI-3934830">
        <id>Q08830</id>
    </interactant>
    <interactant intactId="EBI-2830752">
        <id>P18627</id>
        <label>LAG3</label>
    </interactant>
    <organismsDiffer>false</organismsDiffer>
    <experiments>3</experiments>
</comment>
<comment type="interaction">
    <interactant intactId="EBI-3934830">
        <id>Q08830</id>
    </interactant>
    <interactant intactId="EBI-34579204">
        <id>Q61790</id>
        <label>Lag3</label>
    </interactant>
    <organismsDiffer>true</organismsDiffer>
    <experiments>2</experiments>
</comment>
<comment type="subcellular location">
    <subcellularLocation>
        <location evidence="3 7">Secreted</location>
    </subcellularLocation>
    <text evidence="7">Secreted in the blood plasma.</text>
</comment>
<comment type="tissue specificity">
    <text evidence="3">Under normal conditions, liver-specific.</text>
</comment>
<comment type="induction">
    <text evidence="5 7">Expression is induced by interleukin-6 (IL6) (PubMed:18039467). Up-regulated in a number of cancers, such as lung cancer, prostate cancer, melanoma and colorectal cancer (PubMed:30580966).</text>
</comment>
<dbReference type="EMBL" id="D14446">
    <property type="protein sequence ID" value="BAA03336.1"/>
    <property type="molecule type" value="mRNA"/>
</dbReference>
<dbReference type="EMBL" id="D87342">
    <property type="protein sequence ID" value="BAB70690.1"/>
    <property type="molecule type" value="mRNA"/>
</dbReference>
<dbReference type="EMBL" id="AF168954">
    <property type="protein sequence ID" value="AAM88911.1"/>
    <property type="molecule type" value="mRNA"/>
</dbReference>
<dbReference type="EMBL" id="BT006635">
    <property type="protein sequence ID" value="AAP35281.1"/>
    <property type="molecule type" value="mRNA"/>
</dbReference>
<dbReference type="EMBL" id="DQ086826">
    <property type="protein sequence ID" value="AAY68216.1"/>
    <property type="molecule type" value="Genomic_DNA"/>
</dbReference>
<dbReference type="EMBL" id="AK289448">
    <property type="protein sequence ID" value="BAF82137.1"/>
    <property type="molecule type" value="mRNA"/>
</dbReference>
<dbReference type="EMBL" id="AC087273">
    <property type="status" value="NOT_ANNOTATED_CDS"/>
    <property type="molecule type" value="Genomic_DNA"/>
</dbReference>
<dbReference type="EMBL" id="BC007047">
    <property type="protein sequence ID" value="AAH07047.1"/>
    <property type="molecule type" value="mRNA"/>
</dbReference>
<dbReference type="CCDS" id="CCDS6004.1"/>
<dbReference type="PIR" id="JN0596">
    <property type="entry name" value="JN0596"/>
</dbReference>
<dbReference type="RefSeq" id="NP_004458.3">
    <property type="nucleotide sequence ID" value="NM_004467.3"/>
</dbReference>
<dbReference type="RefSeq" id="NP_671736.2">
    <property type="nucleotide sequence ID" value="NM_147203.2"/>
</dbReference>
<dbReference type="RefSeq" id="NP_963846.1">
    <property type="nucleotide sequence ID" value="NM_201552.1"/>
</dbReference>
<dbReference type="RefSeq" id="NP_963847.1">
    <property type="nucleotide sequence ID" value="NM_201553.1"/>
</dbReference>
<dbReference type="RefSeq" id="XP_016868721.1">
    <property type="nucleotide sequence ID" value="XM_017013232.1"/>
</dbReference>
<dbReference type="RefSeq" id="XP_054216106.1">
    <property type="nucleotide sequence ID" value="XM_054360131.1"/>
</dbReference>
<dbReference type="PDB" id="7TZ2">
    <property type="method" value="X-ray"/>
    <property type="resolution" value="2.55 A"/>
    <property type="chains" value="A/B/C=74-306"/>
</dbReference>
<dbReference type="PDBsum" id="7TZ2"/>
<dbReference type="SMR" id="Q08830"/>
<dbReference type="BioGRID" id="108558">
    <property type="interactions" value="76"/>
</dbReference>
<dbReference type="FunCoup" id="Q08830">
    <property type="interactions" value="207"/>
</dbReference>
<dbReference type="IntAct" id="Q08830">
    <property type="interactions" value="69"/>
</dbReference>
<dbReference type="STRING" id="9606.ENSP00000381133"/>
<dbReference type="UniLectin" id="Q08830"/>
<dbReference type="GlyGen" id="Q08830">
    <property type="glycosylation" value="1 site"/>
</dbReference>
<dbReference type="iPTMnet" id="Q08830"/>
<dbReference type="PhosphoSitePlus" id="Q08830"/>
<dbReference type="BioMuta" id="FGL1"/>
<dbReference type="DMDM" id="147744562"/>
<dbReference type="jPOST" id="Q08830"/>
<dbReference type="MassIVE" id="Q08830"/>
<dbReference type="PaxDb" id="9606-ENSP00000381133"/>
<dbReference type="PeptideAtlas" id="Q08830"/>
<dbReference type="ProteomicsDB" id="58649"/>
<dbReference type="Antibodypedia" id="22306">
    <property type="antibodies" value="412 antibodies from 35 providers"/>
</dbReference>
<dbReference type="DNASU" id="2267"/>
<dbReference type="Ensembl" id="ENST00000381840.5">
    <property type="protein sequence ID" value="ENSP00000371262.2"/>
    <property type="gene ID" value="ENSG00000104760.17"/>
</dbReference>
<dbReference type="Ensembl" id="ENST00000381841.4">
    <property type="protein sequence ID" value="ENSP00000371263.2"/>
    <property type="gene ID" value="ENSG00000104760.17"/>
</dbReference>
<dbReference type="Ensembl" id="ENST00000398054.5">
    <property type="protein sequence ID" value="ENSP00000381131.1"/>
    <property type="gene ID" value="ENSG00000104760.17"/>
</dbReference>
<dbReference type="Ensembl" id="ENST00000398056.6">
    <property type="protein sequence ID" value="ENSP00000381133.2"/>
    <property type="gene ID" value="ENSG00000104760.17"/>
</dbReference>
<dbReference type="Ensembl" id="ENST00000427924.5">
    <property type="protein sequence ID" value="ENSP00000401952.1"/>
    <property type="gene ID" value="ENSG00000104760.17"/>
</dbReference>
<dbReference type="Ensembl" id="ENST00000518650.5">
    <property type="protein sequence ID" value="ENSP00000428430.1"/>
    <property type="gene ID" value="ENSG00000104760.17"/>
</dbReference>
<dbReference type="Ensembl" id="ENST00000522444.5">
    <property type="protein sequence ID" value="ENSP00000429757.1"/>
    <property type="gene ID" value="ENSG00000104760.17"/>
</dbReference>
<dbReference type="GeneID" id="2267"/>
<dbReference type="KEGG" id="hsa:2267"/>
<dbReference type="MANE-Select" id="ENST00000427924.5">
    <property type="protein sequence ID" value="ENSP00000401952.1"/>
    <property type="RefSeq nucleotide sequence ID" value="NM_004467.4"/>
    <property type="RefSeq protein sequence ID" value="NP_004458.3"/>
</dbReference>
<dbReference type="UCSC" id="uc003wxx.4">
    <property type="organism name" value="human"/>
</dbReference>
<dbReference type="AGR" id="HGNC:3695"/>
<dbReference type="CTD" id="2267"/>
<dbReference type="DisGeNET" id="2267"/>
<dbReference type="GeneCards" id="FGL1"/>
<dbReference type="HGNC" id="HGNC:3695">
    <property type="gene designation" value="FGL1"/>
</dbReference>
<dbReference type="HPA" id="ENSG00000104760">
    <property type="expression patterns" value="Tissue enriched (liver)"/>
</dbReference>
<dbReference type="MIM" id="605776">
    <property type="type" value="gene"/>
</dbReference>
<dbReference type="neXtProt" id="NX_Q08830"/>
<dbReference type="OpenTargets" id="ENSG00000104760"/>
<dbReference type="PharmGKB" id="PA28133"/>
<dbReference type="VEuPathDB" id="HostDB:ENSG00000104760"/>
<dbReference type="eggNOG" id="KOG2579">
    <property type="taxonomic scope" value="Eukaryota"/>
</dbReference>
<dbReference type="GeneTree" id="ENSGT00940000160647"/>
<dbReference type="HOGENOM" id="CLU_038628_1_3_1"/>
<dbReference type="InParanoid" id="Q08830"/>
<dbReference type="OMA" id="ASHQGIK"/>
<dbReference type="OrthoDB" id="7725475at2759"/>
<dbReference type="PAN-GO" id="Q08830">
    <property type="GO annotations" value="5 GO annotations based on evolutionary models"/>
</dbReference>
<dbReference type="PhylomeDB" id="Q08830"/>
<dbReference type="TreeFam" id="TF336658"/>
<dbReference type="PathwayCommons" id="Q08830"/>
<dbReference type="SignaLink" id="Q08830"/>
<dbReference type="BioGRID-ORCS" id="2267">
    <property type="hits" value="14 hits in 1148 CRISPR screens"/>
</dbReference>
<dbReference type="ChiTaRS" id="FGL1">
    <property type="organism name" value="human"/>
</dbReference>
<dbReference type="GeneWiki" id="FGL1"/>
<dbReference type="GenomeRNAi" id="2267"/>
<dbReference type="Pharos" id="Q08830">
    <property type="development level" value="Tbio"/>
</dbReference>
<dbReference type="PRO" id="PR:Q08830"/>
<dbReference type="Proteomes" id="UP000005640">
    <property type="component" value="Chromosome 8"/>
</dbReference>
<dbReference type="RNAct" id="Q08830">
    <property type="molecule type" value="protein"/>
</dbReference>
<dbReference type="Bgee" id="ENSG00000104760">
    <property type="expression patterns" value="Expressed in right lobe of liver and 124 other cell types or tissues"/>
</dbReference>
<dbReference type="GO" id="GO:0062023">
    <property type="term" value="C:collagen-containing extracellular matrix"/>
    <property type="evidence" value="ECO:0000318"/>
    <property type="project" value="GO_Central"/>
</dbReference>
<dbReference type="GO" id="GO:0005576">
    <property type="term" value="C:extracellular region"/>
    <property type="evidence" value="ECO:0000314"/>
    <property type="project" value="UniProtKB"/>
</dbReference>
<dbReference type="GO" id="GO:0005615">
    <property type="term" value="C:extracellular space"/>
    <property type="evidence" value="ECO:0000318"/>
    <property type="project" value="GO_Central"/>
</dbReference>
<dbReference type="GO" id="GO:0005577">
    <property type="term" value="C:fibrinogen complex"/>
    <property type="evidence" value="ECO:0000304"/>
    <property type="project" value="ProtInc"/>
</dbReference>
<dbReference type="GO" id="GO:0002250">
    <property type="term" value="P:adaptive immune response"/>
    <property type="evidence" value="ECO:0007669"/>
    <property type="project" value="UniProtKB-KW"/>
</dbReference>
<dbReference type="GO" id="GO:0007596">
    <property type="term" value="P:blood coagulation"/>
    <property type="evidence" value="ECO:0007669"/>
    <property type="project" value="InterPro"/>
</dbReference>
<dbReference type="GO" id="GO:0072574">
    <property type="term" value="P:hepatocyte proliferation"/>
    <property type="evidence" value="ECO:0000314"/>
    <property type="project" value="UniProtKB"/>
</dbReference>
<dbReference type="GO" id="GO:0050868">
    <property type="term" value="P:negative regulation of T cell activation"/>
    <property type="evidence" value="ECO:0000250"/>
    <property type="project" value="UniProtKB"/>
</dbReference>
<dbReference type="GO" id="GO:0050776">
    <property type="term" value="P:regulation of immune response"/>
    <property type="evidence" value="ECO:0000250"/>
    <property type="project" value="UniProtKB"/>
</dbReference>
<dbReference type="CDD" id="cd00087">
    <property type="entry name" value="FReD"/>
    <property type="match status" value="1"/>
</dbReference>
<dbReference type="FunFam" id="3.90.215.10:FF:000001">
    <property type="entry name" value="Tenascin isoform 1"/>
    <property type="match status" value="1"/>
</dbReference>
<dbReference type="Gene3D" id="3.90.215.10">
    <property type="entry name" value="Gamma Fibrinogen, chain A, domain 1"/>
    <property type="match status" value="1"/>
</dbReference>
<dbReference type="InterPro" id="IPR037579">
    <property type="entry name" value="FIB_ANG-like"/>
</dbReference>
<dbReference type="InterPro" id="IPR036056">
    <property type="entry name" value="Fibrinogen-like_C"/>
</dbReference>
<dbReference type="InterPro" id="IPR014716">
    <property type="entry name" value="Fibrinogen_a/b/g_C_1"/>
</dbReference>
<dbReference type="InterPro" id="IPR002181">
    <property type="entry name" value="Fibrinogen_a/b/g_C_dom"/>
</dbReference>
<dbReference type="InterPro" id="IPR020837">
    <property type="entry name" value="Fibrinogen_CS"/>
</dbReference>
<dbReference type="NCBIfam" id="NF040941">
    <property type="entry name" value="GGGWT_bact"/>
    <property type="match status" value="1"/>
</dbReference>
<dbReference type="PANTHER" id="PTHR47221">
    <property type="entry name" value="FIBRINOGEN ALPHA CHAIN"/>
    <property type="match status" value="1"/>
</dbReference>
<dbReference type="PANTHER" id="PTHR47221:SF8">
    <property type="entry name" value="FIBRINOGEN LIKE 1A"/>
    <property type="match status" value="1"/>
</dbReference>
<dbReference type="Pfam" id="PF00147">
    <property type="entry name" value="Fibrinogen_C"/>
    <property type="match status" value="1"/>
</dbReference>
<dbReference type="SMART" id="SM00186">
    <property type="entry name" value="FBG"/>
    <property type="match status" value="1"/>
</dbReference>
<dbReference type="SUPFAM" id="SSF56496">
    <property type="entry name" value="Fibrinogen C-terminal domain-like"/>
    <property type="match status" value="1"/>
</dbReference>
<dbReference type="PROSITE" id="PS00514">
    <property type="entry name" value="FIBRINOGEN_C_1"/>
    <property type="match status" value="1"/>
</dbReference>
<dbReference type="PROSITE" id="PS51406">
    <property type="entry name" value="FIBRINOGEN_C_2"/>
    <property type="match status" value="1"/>
</dbReference>
<reference key="1">
    <citation type="journal article" date="1993" name="Biochem. Biophys. Res. Commun.">
        <title>Molecular cloning and initial characterization of a novel fibrinogen-related gene, HFREP-1.</title>
        <authorList>
            <person name="Yamamoto T."/>
            <person name="Gotoh M."/>
            <person name="Sasaki H."/>
            <person name="Terada M."/>
            <person name="Kitajima M."/>
            <person name="Hirohashi S."/>
        </authorList>
    </citation>
    <scope>NUCLEOTIDE SEQUENCE [MRNA]</scope>
    <scope>VARIANTS ILE-15 AND VAL-72</scope>
    <source>
        <tissue>Liver</tissue>
    </source>
</reference>
<reference key="2">
    <citation type="journal article" date="2001" name="Biochim. Biophys. Acta">
        <title>Molecular cloning and functional expression analysis of a cDNA for human hepassocin, a liver-specific protein with hepatocyte mitogenic activity.</title>
        <authorList>
            <person name="Hara H."/>
            <person name="Yoshimura H."/>
            <person name="Uchida S."/>
            <person name="Toyoda Y."/>
            <person name="Aoki M."/>
            <person name="Sakai Y."/>
            <person name="Morimoto S."/>
            <person name="Shiokawa K."/>
        </authorList>
    </citation>
    <scope>NUCLEOTIDE SEQUENCE [MRNA]</scope>
    <scope>PARTIAL PROTEIN SEQUENCE</scope>
    <scope>FUNCTION</scope>
    <scope>SUBCELLULAR LOCATION</scope>
    <scope>SUBUNIT</scope>
    <scope>VARIANTS ILE-15 AND LEU-105</scope>
    <source>
        <tissue>Liver</tissue>
    </source>
</reference>
<reference key="3">
    <citation type="submission" date="1999-07" db="EMBL/GenBank/DDBJ databases">
        <title>LFIRE-1, a liver-specific expressing gene on human chromosome 8p22, is frequently dowm-regulated and functions as tumor suppressor in human hepatocellular carcinoma.</title>
        <authorList>
            <person name="Yan J."/>
            <person name="Yu Y."/>
            <person name="Wang N."/>
            <person name="Xu Y."/>
        </authorList>
    </citation>
    <scope>NUCLEOTIDE SEQUENCE [MRNA]</scope>
    <scope>VARIANTS ILE-15 AND VAL-72</scope>
    <source>
        <tissue>Liver</tissue>
    </source>
</reference>
<reference key="4">
    <citation type="submission" date="2003-05" db="EMBL/GenBank/DDBJ databases">
        <title>Cloning of human full-length CDSs in BD Creator(TM) system donor vector.</title>
        <authorList>
            <person name="Kalnine N."/>
            <person name="Chen X."/>
            <person name="Rolfs A."/>
            <person name="Halleck A."/>
            <person name="Hines L."/>
            <person name="Eisenstein S."/>
            <person name="Koundinya M."/>
            <person name="Raphael J."/>
            <person name="Moreira D."/>
            <person name="Kelley T."/>
            <person name="LaBaer J."/>
            <person name="Lin Y."/>
            <person name="Phelan M."/>
            <person name="Farmer A."/>
        </authorList>
    </citation>
    <scope>NUCLEOTIDE SEQUENCE [LARGE SCALE MRNA]</scope>
</reference>
<reference key="5">
    <citation type="journal article" date="2004" name="Nat. Genet.">
        <title>Complete sequencing and characterization of 21,243 full-length human cDNAs.</title>
        <authorList>
            <person name="Ota T."/>
            <person name="Suzuki Y."/>
            <person name="Nishikawa T."/>
            <person name="Otsuki T."/>
            <person name="Sugiyama T."/>
            <person name="Irie R."/>
            <person name="Wakamatsu A."/>
            <person name="Hayashi K."/>
            <person name="Sato H."/>
            <person name="Nagai K."/>
            <person name="Kimura K."/>
            <person name="Makita H."/>
            <person name="Sekine M."/>
            <person name="Obayashi M."/>
            <person name="Nishi T."/>
            <person name="Shibahara T."/>
            <person name="Tanaka T."/>
            <person name="Ishii S."/>
            <person name="Yamamoto J."/>
            <person name="Saito K."/>
            <person name="Kawai Y."/>
            <person name="Isono Y."/>
            <person name="Nakamura Y."/>
            <person name="Nagahari K."/>
            <person name="Murakami K."/>
            <person name="Yasuda T."/>
            <person name="Iwayanagi T."/>
            <person name="Wagatsuma M."/>
            <person name="Shiratori A."/>
            <person name="Sudo H."/>
            <person name="Hosoiri T."/>
            <person name="Kaku Y."/>
            <person name="Kodaira H."/>
            <person name="Kondo H."/>
            <person name="Sugawara M."/>
            <person name="Takahashi M."/>
            <person name="Kanda K."/>
            <person name="Yokoi T."/>
            <person name="Furuya T."/>
            <person name="Kikkawa E."/>
            <person name="Omura Y."/>
            <person name="Abe K."/>
            <person name="Kamihara K."/>
            <person name="Katsuta N."/>
            <person name="Sato K."/>
            <person name="Tanikawa M."/>
            <person name="Yamazaki M."/>
            <person name="Ninomiya K."/>
            <person name="Ishibashi T."/>
            <person name="Yamashita H."/>
            <person name="Murakawa K."/>
            <person name="Fujimori K."/>
            <person name="Tanai H."/>
            <person name="Kimata M."/>
            <person name="Watanabe M."/>
            <person name="Hiraoka S."/>
            <person name="Chiba Y."/>
            <person name="Ishida S."/>
            <person name="Ono Y."/>
            <person name="Takiguchi S."/>
            <person name="Watanabe S."/>
            <person name="Yosida M."/>
            <person name="Hotuta T."/>
            <person name="Kusano J."/>
            <person name="Kanehori K."/>
            <person name="Takahashi-Fujii A."/>
            <person name="Hara H."/>
            <person name="Tanase T.-O."/>
            <person name="Nomura Y."/>
            <person name="Togiya S."/>
            <person name="Komai F."/>
            <person name="Hara R."/>
            <person name="Takeuchi K."/>
            <person name="Arita M."/>
            <person name="Imose N."/>
            <person name="Musashino K."/>
            <person name="Yuuki H."/>
            <person name="Oshima A."/>
            <person name="Sasaki N."/>
            <person name="Aotsuka S."/>
            <person name="Yoshikawa Y."/>
            <person name="Matsunawa H."/>
            <person name="Ichihara T."/>
            <person name="Shiohata N."/>
            <person name="Sano S."/>
            <person name="Moriya S."/>
            <person name="Momiyama H."/>
            <person name="Satoh N."/>
            <person name="Takami S."/>
            <person name="Terashima Y."/>
            <person name="Suzuki O."/>
            <person name="Nakagawa S."/>
            <person name="Senoh A."/>
            <person name="Mizoguchi H."/>
            <person name="Goto Y."/>
            <person name="Shimizu F."/>
            <person name="Wakebe H."/>
            <person name="Hishigaki H."/>
            <person name="Watanabe T."/>
            <person name="Sugiyama A."/>
            <person name="Takemoto M."/>
            <person name="Kawakami B."/>
            <person name="Yamazaki M."/>
            <person name="Watanabe K."/>
            <person name="Kumagai A."/>
            <person name="Itakura S."/>
            <person name="Fukuzumi Y."/>
            <person name="Fujimori Y."/>
            <person name="Komiyama M."/>
            <person name="Tashiro H."/>
            <person name="Tanigami A."/>
            <person name="Fujiwara T."/>
            <person name="Ono T."/>
            <person name="Yamada K."/>
            <person name="Fujii Y."/>
            <person name="Ozaki K."/>
            <person name="Hirao M."/>
            <person name="Ohmori Y."/>
            <person name="Kawabata A."/>
            <person name="Hikiji T."/>
            <person name="Kobatake N."/>
            <person name="Inagaki H."/>
            <person name="Ikema Y."/>
            <person name="Okamoto S."/>
            <person name="Okitani R."/>
            <person name="Kawakami T."/>
            <person name="Noguchi S."/>
            <person name="Itoh T."/>
            <person name="Shigeta K."/>
            <person name="Senba T."/>
            <person name="Matsumura K."/>
            <person name="Nakajima Y."/>
            <person name="Mizuno T."/>
            <person name="Morinaga M."/>
            <person name="Sasaki M."/>
            <person name="Togashi T."/>
            <person name="Oyama M."/>
            <person name="Hata H."/>
            <person name="Watanabe M."/>
            <person name="Komatsu T."/>
            <person name="Mizushima-Sugano J."/>
            <person name="Satoh T."/>
            <person name="Shirai Y."/>
            <person name="Takahashi Y."/>
            <person name="Nakagawa K."/>
            <person name="Okumura K."/>
            <person name="Nagase T."/>
            <person name="Nomura N."/>
            <person name="Kikuchi H."/>
            <person name="Masuho Y."/>
            <person name="Yamashita R."/>
            <person name="Nakai K."/>
            <person name="Yada T."/>
            <person name="Nakamura Y."/>
            <person name="Ohara O."/>
            <person name="Isogai T."/>
            <person name="Sugano S."/>
        </authorList>
    </citation>
    <scope>NUCLEOTIDE SEQUENCE [LARGE SCALE MRNA]</scope>
    <scope>VARIANTS ILE-15 AND VAL-72</scope>
    <source>
        <tissue>Urinary bladder</tissue>
    </source>
</reference>
<reference key="6">
    <citation type="submission" date="2005-06" db="EMBL/GenBank/DDBJ databases">
        <authorList>
            <consortium name="SeattleSNPs variation discovery resource"/>
        </authorList>
    </citation>
    <scope>NUCLEOTIDE SEQUENCE [GENOMIC DNA]</scope>
    <scope>VARIANTS ILE-15; VAL-72; LEU-105; HIS-111; SER-121 AND PHE-140</scope>
</reference>
<reference key="7">
    <citation type="journal article" date="2006" name="Nature">
        <title>DNA sequence and analysis of human chromosome 8.</title>
        <authorList>
            <person name="Nusbaum C."/>
            <person name="Mikkelsen T.S."/>
            <person name="Zody M.C."/>
            <person name="Asakawa S."/>
            <person name="Taudien S."/>
            <person name="Garber M."/>
            <person name="Kodira C.D."/>
            <person name="Schueler M.G."/>
            <person name="Shimizu A."/>
            <person name="Whittaker C.A."/>
            <person name="Chang J.L."/>
            <person name="Cuomo C.A."/>
            <person name="Dewar K."/>
            <person name="FitzGerald M.G."/>
            <person name="Yang X."/>
            <person name="Allen N.R."/>
            <person name="Anderson S."/>
            <person name="Asakawa T."/>
            <person name="Blechschmidt K."/>
            <person name="Bloom T."/>
            <person name="Borowsky M.L."/>
            <person name="Butler J."/>
            <person name="Cook A."/>
            <person name="Corum B."/>
            <person name="DeArellano K."/>
            <person name="DeCaprio D."/>
            <person name="Dooley K.T."/>
            <person name="Dorris L. III"/>
            <person name="Engels R."/>
            <person name="Gloeckner G."/>
            <person name="Hafez N."/>
            <person name="Hagopian D.S."/>
            <person name="Hall J.L."/>
            <person name="Ishikawa S.K."/>
            <person name="Jaffe D.B."/>
            <person name="Kamat A."/>
            <person name="Kudoh J."/>
            <person name="Lehmann R."/>
            <person name="Lokitsang T."/>
            <person name="Macdonald P."/>
            <person name="Major J.E."/>
            <person name="Matthews C.D."/>
            <person name="Mauceli E."/>
            <person name="Menzel U."/>
            <person name="Mihalev A.H."/>
            <person name="Minoshima S."/>
            <person name="Murayama Y."/>
            <person name="Naylor J.W."/>
            <person name="Nicol R."/>
            <person name="Nguyen C."/>
            <person name="O'Leary S.B."/>
            <person name="O'Neill K."/>
            <person name="Parker S.C.J."/>
            <person name="Polley A."/>
            <person name="Raymond C.K."/>
            <person name="Reichwald K."/>
            <person name="Rodriguez J."/>
            <person name="Sasaki T."/>
            <person name="Schilhabel M."/>
            <person name="Siddiqui R."/>
            <person name="Smith C.L."/>
            <person name="Sneddon T.P."/>
            <person name="Talamas J.A."/>
            <person name="Tenzin P."/>
            <person name="Topham K."/>
            <person name="Venkataraman V."/>
            <person name="Wen G."/>
            <person name="Yamazaki S."/>
            <person name="Young S.K."/>
            <person name="Zeng Q."/>
            <person name="Zimmer A.R."/>
            <person name="Rosenthal A."/>
            <person name="Birren B.W."/>
            <person name="Platzer M."/>
            <person name="Shimizu N."/>
            <person name="Lander E.S."/>
        </authorList>
    </citation>
    <scope>NUCLEOTIDE SEQUENCE [LARGE SCALE GENOMIC DNA]</scope>
</reference>
<reference key="8">
    <citation type="journal article" date="2004" name="Genome Res.">
        <title>The status, quality, and expansion of the NIH full-length cDNA project: the Mammalian Gene Collection (MGC).</title>
        <authorList>
            <consortium name="The MGC Project Team"/>
        </authorList>
    </citation>
    <scope>NUCLEOTIDE SEQUENCE [LARGE SCALE MRNA]</scope>
    <source>
        <tissue>Liver</tissue>
    </source>
</reference>
<reference key="9">
    <citation type="journal article" date="2008" name="Biochem. Biophys. Res. Commun.">
        <title>Fibrinogen-like protein 1, a hepatocyte derived protein is an acute phase reactant.</title>
        <authorList>
            <person name="Liu Z."/>
            <person name="Ukomadu C."/>
        </authorList>
    </citation>
    <scope>INDUCTION</scope>
</reference>
<reference key="10">
    <citation type="journal article" date="2010" name="Gut">
        <title>Recombinant human hepassocin stimulates proliferation of hepatocytes in vivo and improves survival in rats with fulminant hepatic failure.</title>
        <authorList>
            <person name="Li C.Y."/>
            <person name="Cao C.Z."/>
            <person name="Xu W.X."/>
            <person name="Cao M.M."/>
            <person name="Yang F."/>
            <person name="Dong L."/>
            <person name="Yu M."/>
            <person name="Zhan Y.Q."/>
            <person name="Gao Y.B."/>
            <person name="Li W."/>
            <person name="Wang Z.D."/>
            <person name="Ge C.H."/>
            <person name="Wang Q.M."/>
            <person name="Peng R.Y."/>
            <person name="Yang X.M."/>
        </authorList>
    </citation>
    <scope>FUNCTION</scope>
</reference>
<reference key="11">
    <citation type="journal article" date="2014" name="J. Proteomics">
        <title>An enzyme assisted RP-RPLC approach for in-depth analysis of human liver phosphoproteome.</title>
        <authorList>
            <person name="Bian Y."/>
            <person name="Song C."/>
            <person name="Cheng K."/>
            <person name="Dong M."/>
            <person name="Wang F."/>
            <person name="Huang J."/>
            <person name="Sun D."/>
            <person name="Wang L."/>
            <person name="Ye M."/>
            <person name="Zou H."/>
        </authorList>
    </citation>
    <scope>IDENTIFICATION BY MASS SPECTROMETRY [LARGE SCALE ANALYSIS]</scope>
    <source>
        <tissue>Liver</tissue>
    </source>
</reference>
<reference key="12">
    <citation type="journal article" date="2018" name="Cell">
        <title>Fibrinogen-like protein 1 is a major immune inhibitory ligand of LAG-3.</title>
        <authorList>
            <person name="Wang J."/>
            <person name="Sanmamed M.F."/>
            <person name="Datar I."/>
            <person name="Su T.T."/>
            <person name="Ji L."/>
            <person name="Sun J."/>
            <person name="Chen L."/>
            <person name="Chen Y."/>
            <person name="Zhu G."/>
            <person name="Yin W."/>
            <person name="Zheng L."/>
            <person name="Zhou T."/>
            <person name="Badri T."/>
            <person name="Yao S."/>
            <person name="Zhu S."/>
            <person name="Boto A."/>
            <person name="Sznol M."/>
            <person name="Melero I."/>
            <person name="Vignali D.A.A."/>
            <person name="Schalper K."/>
            <person name="Chen L."/>
        </authorList>
    </citation>
    <scope>FUNCTION</scope>
    <scope>INTERACTION WITH LAG3</scope>
    <scope>SUBCELLULAR LOCATION</scope>
    <scope>INDUCTION</scope>
</reference>
<gene>
    <name evidence="12 17" type="primary">FGL1</name>
    <name evidence="14" type="synonym">HFREP1</name>
</gene>
<evidence type="ECO:0000255" key="1"/>
<evidence type="ECO:0000255" key="2">
    <source>
        <dbReference type="PROSITE-ProRule" id="PRU00739"/>
    </source>
</evidence>
<evidence type="ECO:0000269" key="3">
    <source>
    </source>
</evidence>
<evidence type="ECO:0000269" key="4">
    <source>
    </source>
</evidence>
<evidence type="ECO:0000269" key="5">
    <source>
    </source>
</evidence>
<evidence type="ECO:0000269" key="6">
    <source>
    </source>
</evidence>
<evidence type="ECO:0000269" key="7">
    <source>
    </source>
</evidence>
<evidence type="ECO:0000269" key="8">
    <source>
    </source>
</evidence>
<evidence type="ECO:0000269" key="9">
    <source ref="3"/>
</evidence>
<evidence type="ECO:0000269" key="10">
    <source ref="6"/>
</evidence>
<evidence type="ECO:0000303" key="11">
    <source>
    </source>
</evidence>
<evidence type="ECO:0000303" key="12">
    <source>
    </source>
</evidence>
<evidence type="ECO:0000303" key="13">
    <source>
    </source>
</evidence>
<evidence type="ECO:0000303" key="14">
    <source>
    </source>
</evidence>
<evidence type="ECO:0000303" key="15">
    <source ref="3"/>
</evidence>
<evidence type="ECO:0000305" key="16"/>
<evidence type="ECO:0000312" key="17">
    <source>
        <dbReference type="HGNC" id="HGNC:3695"/>
    </source>
</evidence>
<evidence type="ECO:0007829" key="18">
    <source>
        <dbReference type="PDB" id="7TZ2"/>
    </source>
</evidence>
<name>FGL1_HUMAN</name>
<organism>
    <name type="scientific">Homo sapiens</name>
    <name type="common">Human</name>
    <dbReference type="NCBI Taxonomy" id="9606"/>
    <lineage>
        <taxon>Eukaryota</taxon>
        <taxon>Metazoa</taxon>
        <taxon>Chordata</taxon>
        <taxon>Craniata</taxon>
        <taxon>Vertebrata</taxon>
        <taxon>Euteleostomi</taxon>
        <taxon>Mammalia</taxon>
        <taxon>Eutheria</taxon>
        <taxon>Euarchontoglires</taxon>
        <taxon>Primates</taxon>
        <taxon>Haplorrhini</taxon>
        <taxon>Catarrhini</taxon>
        <taxon>Hominidae</taxon>
        <taxon>Homo</taxon>
    </lineage>
</organism>
<feature type="signal peptide" evidence="3">
    <location>
        <begin position="1"/>
        <end position="22"/>
    </location>
</feature>
<feature type="chain" id="PRO_0000009105" description="Fibrinogen-like protein 1">
    <location>
        <begin position="23"/>
        <end position="312"/>
    </location>
</feature>
<feature type="domain" description="Fibrinogen C-terminal" evidence="2">
    <location>
        <begin position="74"/>
        <end position="306"/>
    </location>
</feature>
<feature type="coiled-coil region" evidence="1">
    <location>
        <begin position="23"/>
        <end position="61"/>
    </location>
</feature>
<feature type="disulfide bond" description="Interchain" evidence="2">
    <location>
        <position position="26"/>
    </location>
</feature>
<feature type="disulfide bond" evidence="2">
    <location>
        <begin position="83"/>
        <end position="112"/>
    </location>
</feature>
<feature type="disulfide bond" evidence="2">
    <location>
        <begin position="248"/>
        <end position="261"/>
    </location>
</feature>
<feature type="sequence variant" id="VAR_024002" description="In dbSNP:rs484373." evidence="3 4 8 9 10">
    <original>T</original>
    <variation>I</variation>
    <location>
        <position position="15"/>
    </location>
</feature>
<feature type="sequence variant" id="VAR_024003" description="In dbSNP:rs3739406." evidence="4 8 9 10">
    <original>I</original>
    <variation>V</variation>
    <location>
        <position position="72"/>
    </location>
</feature>
<feature type="sequence variant" id="VAR_024004" description="In dbSNP:rs2653406." evidence="3 10">
    <original>P</original>
    <variation>L</variation>
    <location>
        <position position="105"/>
    </location>
</feature>
<feature type="sequence variant" id="VAR_024005" description="In dbSNP:rs34019703." evidence="10">
    <original>Y</original>
    <variation>H</variation>
    <location>
        <position position="111"/>
    </location>
</feature>
<feature type="sequence variant" id="VAR_049067" description="In dbSNP:rs35311020.">
    <original>M</original>
    <variation>V</variation>
    <location>
        <position position="114"/>
    </location>
</feature>
<feature type="sequence variant" id="VAR_024006" description="In dbSNP:rs34239530." evidence="10">
    <original>T</original>
    <variation>S</variation>
    <location>
        <position position="121"/>
    </location>
</feature>
<feature type="sequence variant" id="VAR_024007" description="In dbSNP:rs35431851." evidence="10">
    <original>Y</original>
    <variation>F</variation>
    <location>
        <position position="140"/>
    </location>
</feature>
<feature type="sequence variant" id="VAR_049068" description="In dbSNP:rs2653414.">
    <original>W</original>
    <variation>L</variation>
    <location>
        <position position="256"/>
    </location>
</feature>
<feature type="sequence conflict" description="In Ref. 1; BAA03336." evidence="16" ref="1">
    <original>N</original>
    <variation>D</variation>
    <location>
        <position position="69"/>
    </location>
</feature>
<feature type="helix" evidence="18">
    <location>
        <begin position="83"/>
        <end position="88"/>
    </location>
</feature>
<feature type="strand" evidence="18">
    <location>
        <begin position="95"/>
        <end position="99"/>
    </location>
</feature>
<feature type="strand" evidence="18">
    <location>
        <begin position="108"/>
        <end position="113"/>
    </location>
</feature>
<feature type="strand" evidence="18">
    <location>
        <begin position="115"/>
        <end position="118"/>
    </location>
</feature>
<feature type="strand" evidence="18">
    <location>
        <begin position="120"/>
        <end position="129"/>
    </location>
</feature>
<feature type="helix" evidence="18">
    <location>
        <begin position="137"/>
        <end position="142"/>
    </location>
</feature>
<feature type="strand" evidence="18">
    <location>
        <begin position="147"/>
        <end position="149"/>
    </location>
</feature>
<feature type="helix" evidence="18">
    <location>
        <begin position="158"/>
        <end position="166"/>
    </location>
</feature>
<feature type="strand" evidence="18">
    <location>
        <begin position="170"/>
        <end position="177"/>
    </location>
</feature>
<feature type="strand" evidence="18">
    <location>
        <begin position="179"/>
        <end position="181"/>
    </location>
</feature>
<feature type="strand" evidence="18">
    <location>
        <begin position="183"/>
        <end position="193"/>
    </location>
</feature>
<feature type="turn" evidence="18">
    <location>
        <begin position="196"/>
        <end position="199"/>
    </location>
</feature>
<feature type="strand" evidence="18">
    <location>
        <begin position="207"/>
        <end position="211"/>
    </location>
</feature>
<feature type="helix" evidence="18">
    <location>
        <begin position="223"/>
        <end position="225"/>
    </location>
</feature>
<feature type="strand" evidence="18">
    <location>
        <begin position="234"/>
        <end position="236"/>
    </location>
</feature>
<feature type="strand" evidence="18">
    <location>
        <begin position="242"/>
        <end position="246"/>
    </location>
</feature>
<feature type="helix" evidence="18">
    <location>
        <begin position="248"/>
        <end position="252"/>
    </location>
</feature>
<feature type="strand" evidence="18">
    <location>
        <begin position="272"/>
        <end position="274"/>
    </location>
</feature>
<feature type="turn" evidence="18">
    <location>
        <begin position="286"/>
        <end position="288"/>
    </location>
</feature>
<feature type="strand" evidence="18">
    <location>
        <begin position="291"/>
        <end position="294"/>
    </location>
</feature>
<feature type="strand" evidence="18">
    <location>
        <begin position="296"/>
        <end position="304"/>
    </location>
</feature>
<protein>
    <recommendedName>
        <fullName evidence="12">Fibrinogen-like protein 1</fullName>
    </recommendedName>
    <alternativeName>
        <fullName evidence="11">HP-041</fullName>
    </alternativeName>
    <alternativeName>
        <fullName evidence="11">Hepassocin</fullName>
        <shortName evidence="13">HPS</shortName>
    </alternativeName>
    <alternativeName>
        <fullName evidence="14">Hepatocyte-derived fibrinogen-related protein 1</fullName>
        <shortName evidence="14">HFREP-1</shortName>
    </alternativeName>
    <alternativeName>
        <fullName evidence="15">Liver fibrinogen-related protein 1</fullName>
        <shortName evidence="15">LFIRE-1</shortName>
    </alternativeName>
</protein>